<dbReference type="EC" id="4.6.1.17" evidence="1"/>
<dbReference type="EMBL" id="CP000958">
    <property type="protein sequence ID" value="ACA91827.1"/>
    <property type="molecule type" value="Genomic_DNA"/>
</dbReference>
<dbReference type="RefSeq" id="WP_012329158.1">
    <property type="nucleotide sequence ID" value="NC_010508.1"/>
</dbReference>
<dbReference type="SMR" id="B1JY03"/>
<dbReference type="GeneID" id="83049451"/>
<dbReference type="KEGG" id="bcm:Bcenmc03_2667"/>
<dbReference type="HOGENOM" id="CLU_074693_1_1_4"/>
<dbReference type="UniPathway" id="UPA00344"/>
<dbReference type="Proteomes" id="UP000002169">
    <property type="component" value="Chromosome 1"/>
</dbReference>
<dbReference type="GO" id="GO:0061799">
    <property type="term" value="F:cyclic pyranopterin monophosphate synthase activity"/>
    <property type="evidence" value="ECO:0007669"/>
    <property type="project" value="UniProtKB-UniRule"/>
</dbReference>
<dbReference type="GO" id="GO:0006777">
    <property type="term" value="P:Mo-molybdopterin cofactor biosynthetic process"/>
    <property type="evidence" value="ECO:0007669"/>
    <property type="project" value="UniProtKB-UniRule"/>
</dbReference>
<dbReference type="CDD" id="cd01420">
    <property type="entry name" value="MoaC_PE"/>
    <property type="match status" value="1"/>
</dbReference>
<dbReference type="Gene3D" id="3.30.70.640">
    <property type="entry name" value="Molybdopterin cofactor biosynthesis C (MoaC) domain"/>
    <property type="match status" value="1"/>
</dbReference>
<dbReference type="HAMAP" id="MF_01224_B">
    <property type="entry name" value="MoaC_B"/>
    <property type="match status" value="1"/>
</dbReference>
<dbReference type="InterPro" id="IPR023045">
    <property type="entry name" value="MoaC"/>
</dbReference>
<dbReference type="InterPro" id="IPR047594">
    <property type="entry name" value="MoaC_bact/euk"/>
</dbReference>
<dbReference type="InterPro" id="IPR036522">
    <property type="entry name" value="MoaC_sf"/>
</dbReference>
<dbReference type="InterPro" id="IPR050105">
    <property type="entry name" value="MoCo_biosynth_MoaA/MoaC"/>
</dbReference>
<dbReference type="InterPro" id="IPR002820">
    <property type="entry name" value="Mopterin_CF_biosynth-C_dom"/>
</dbReference>
<dbReference type="NCBIfam" id="TIGR00581">
    <property type="entry name" value="moaC"/>
    <property type="match status" value="1"/>
</dbReference>
<dbReference type="NCBIfam" id="NF006870">
    <property type="entry name" value="PRK09364.1"/>
    <property type="match status" value="1"/>
</dbReference>
<dbReference type="PANTHER" id="PTHR22960:SF29">
    <property type="entry name" value="CYCLIC PYRANOPTERIN MONOPHOSPHATE SYNTHASE"/>
    <property type="match status" value="1"/>
</dbReference>
<dbReference type="PANTHER" id="PTHR22960">
    <property type="entry name" value="MOLYBDOPTERIN COFACTOR SYNTHESIS PROTEIN A"/>
    <property type="match status" value="1"/>
</dbReference>
<dbReference type="Pfam" id="PF01967">
    <property type="entry name" value="MoaC"/>
    <property type="match status" value="1"/>
</dbReference>
<dbReference type="SUPFAM" id="SSF55040">
    <property type="entry name" value="Molybdenum cofactor biosynthesis protein C, MoaC"/>
    <property type="match status" value="1"/>
</dbReference>
<proteinExistence type="inferred from homology"/>
<sequence>MSGLTHFDAAGHAHMVDVGDKQETRRIAIARGTIRMLPATFALIRDGKARKGDVLGVARIAAIQGAKRTADLIPLCHPLALTRVAVEFELDDALPGVHCVVQVETFGRTGVEMEALTAVQVGLLTVYDMCKAVDRGMVITDVSVREKRGGKSGDWKAEDAAG</sequence>
<organism>
    <name type="scientific">Burkholderia orbicola (strain MC0-3)</name>
    <dbReference type="NCBI Taxonomy" id="406425"/>
    <lineage>
        <taxon>Bacteria</taxon>
        <taxon>Pseudomonadati</taxon>
        <taxon>Pseudomonadota</taxon>
        <taxon>Betaproteobacteria</taxon>
        <taxon>Burkholderiales</taxon>
        <taxon>Burkholderiaceae</taxon>
        <taxon>Burkholderia</taxon>
        <taxon>Burkholderia cepacia complex</taxon>
        <taxon>Burkholderia orbicola</taxon>
    </lineage>
</organism>
<protein>
    <recommendedName>
        <fullName evidence="1">Cyclic pyranopterin monophosphate synthase</fullName>
        <ecNumber evidence="1">4.6.1.17</ecNumber>
    </recommendedName>
    <alternativeName>
        <fullName evidence="1">Molybdenum cofactor biosynthesis protein C</fullName>
    </alternativeName>
</protein>
<keyword id="KW-0456">Lyase</keyword>
<keyword id="KW-0501">Molybdenum cofactor biosynthesis</keyword>
<gene>
    <name evidence="1" type="primary">moaC</name>
    <name type="ordered locus">Bcenmc03_2667</name>
</gene>
<evidence type="ECO:0000255" key="1">
    <source>
        <dbReference type="HAMAP-Rule" id="MF_01224"/>
    </source>
</evidence>
<name>MOAC_BURO0</name>
<reference key="1">
    <citation type="submission" date="2008-02" db="EMBL/GenBank/DDBJ databases">
        <title>Complete sequence of chromosome 1 of Burkholderia cenocepacia MC0-3.</title>
        <authorList>
            <person name="Copeland A."/>
            <person name="Lucas S."/>
            <person name="Lapidus A."/>
            <person name="Barry K."/>
            <person name="Bruce D."/>
            <person name="Goodwin L."/>
            <person name="Glavina del Rio T."/>
            <person name="Dalin E."/>
            <person name="Tice H."/>
            <person name="Pitluck S."/>
            <person name="Chain P."/>
            <person name="Malfatti S."/>
            <person name="Shin M."/>
            <person name="Vergez L."/>
            <person name="Schmutz J."/>
            <person name="Larimer F."/>
            <person name="Land M."/>
            <person name="Hauser L."/>
            <person name="Kyrpides N."/>
            <person name="Mikhailova N."/>
            <person name="Tiedje J."/>
            <person name="Richardson P."/>
        </authorList>
    </citation>
    <scope>NUCLEOTIDE SEQUENCE [LARGE SCALE GENOMIC DNA]</scope>
    <source>
        <strain>MC0-3</strain>
    </source>
</reference>
<comment type="function">
    <text evidence="1">Catalyzes the conversion of (8S)-3',8-cyclo-7,8-dihydroguanosine 5'-triphosphate to cyclic pyranopterin monophosphate (cPMP).</text>
</comment>
<comment type="catalytic activity">
    <reaction evidence="1">
        <text>(8S)-3',8-cyclo-7,8-dihydroguanosine 5'-triphosphate = cyclic pyranopterin phosphate + diphosphate</text>
        <dbReference type="Rhea" id="RHEA:49580"/>
        <dbReference type="ChEBI" id="CHEBI:33019"/>
        <dbReference type="ChEBI" id="CHEBI:59648"/>
        <dbReference type="ChEBI" id="CHEBI:131766"/>
        <dbReference type="EC" id="4.6.1.17"/>
    </reaction>
</comment>
<comment type="pathway">
    <text evidence="1">Cofactor biosynthesis; molybdopterin biosynthesis.</text>
</comment>
<comment type="subunit">
    <text evidence="1">Homohexamer; trimer of dimers.</text>
</comment>
<comment type="similarity">
    <text evidence="1">Belongs to the MoaC family.</text>
</comment>
<accession>B1JY03</accession>
<feature type="chain" id="PRO_1000139251" description="Cyclic pyranopterin monophosphate synthase">
    <location>
        <begin position="1"/>
        <end position="162"/>
    </location>
</feature>
<feature type="active site" evidence="1">
    <location>
        <position position="128"/>
    </location>
</feature>
<feature type="binding site" evidence="1">
    <location>
        <begin position="75"/>
        <end position="77"/>
    </location>
    <ligand>
        <name>substrate</name>
    </ligand>
</feature>
<feature type="binding site" evidence="1">
    <location>
        <begin position="113"/>
        <end position="114"/>
    </location>
    <ligand>
        <name>substrate</name>
    </ligand>
</feature>